<proteinExistence type="evidence at protein level"/>
<accession>A0A0C4DH69</accession>
<name>KV109_HUMAN</name>
<protein>
    <recommendedName>
        <fullName evidence="4 9">Immunoglobulin kappa variable 1-9</fullName>
    </recommendedName>
</protein>
<comment type="function">
    <text evidence="5 6 7 8">V region of the variable domain of immunoglobulin light chains that participates in the antigen recognition (PubMed:24600447). Immunoglobulins, also known as antibodies, are membrane-bound or secreted glycoproteins produced by B lymphocytes. In the recognition phase of humoral immunity, the membrane-bound immunoglobulins serve as receptors which, upon binding of a specific antigen, trigger the clonal expansion and differentiation of B lymphocytes into immunoglobulins-secreting plasma cells. Secreted immunoglobulins mediate the effector phase of humoral immunity, which results in the elimination of bound antigens (PubMed:20176268, PubMed:22158414). The antigen binding site is formed by the variable domain of one heavy chain, together with that of its associated light chain. Thus, each immunoglobulin has two antigen binding sites with remarkable affinity for a particular antigen. The variable domains are assembled by a process called V-(D)-J rearrangement and can then be subjected to somatic hypermutations which, after exposure to antigen and selection, allow affinity maturation for a particular antigen (PubMed:17576170, PubMed:20176268).</text>
</comment>
<comment type="subunit">
    <text evidence="6">Immunoglobulins are composed of two identical heavy chains and two identical light chains; disulfide-linked.</text>
</comment>
<comment type="subcellular location">
    <subcellularLocation>
        <location evidence="6 7">Secreted</location>
    </subcellularLocation>
    <subcellularLocation>
        <location evidence="6 7">Cell membrane</location>
    </subcellularLocation>
</comment>
<comment type="polymorphism">
    <text>There are several alleles. The sequence shown is that of IMGT allele IGKV1-9*01.</text>
</comment>
<comment type="caution">
    <text evidence="10">For an example of a full-length immunoglobulin kappa light chain see AC P0DOX7.</text>
</comment>
<reference key="1">
    <citation type="journal article" date="2005" name="Nature">
        <title>Generation and annotation of the DNA sequences of human chromosomes 2 and 4.</title>
        <authorList>
            <person name="Hillier L.W."/>
            <person name="Graves T.A."/>
            <person name="Fulton R.S."/>
            <person name="Fulton L.A."/>
            <person name="Pepin K.H."/>
            <person name="Minx P."/>
            <person name="Wagner-McPherson C."/>
            <person name="Layman D."/>
            <person name="Wylie K."/>
            <person name="Sekhon M."/>
            <person name="Becker M.C."/>
            <person name="Fewell G.A."/>
            <person name="Delehaunty K.D."/>
            <person name="Miner T.L."/>
            <person name="Nash W.E."/>
            <person name="Kremitzki C."/>
            <person name="Oddy L."/>
            <person name="Du H."/>
            <person name="Sun H."/>
            <person name="Bradshaw-Cordum H."/>
            <person name="Ali J."/>
            <person name="Carter J."/>
            <person name="Cordes M."/>
            <person name="Harris A."/>
            <person name="Isak A."/>
            <person name="van Brunt A."/>
            <person name="Nguyen C."/>
            <person name="Du F."/>
            <person name="Courtney L."/>
            <person name="Kalicki J."/>
            <person name="Ozersky P."/>
            <person name="Abbott S."/>
            <person name="Armstrong J."/>
            <person name="Belter E.A."/>
            <person name="Caruso L."/>
            <person name="Cedroni M."/>
            <person name="Cotton M."/>
            <person name="Davidson T."/>
            <person name="Desai A."/>
            <person name="Elliott G."/>
            <person name="Erb T."/>
            <person name="Fronick C."/>
            <person name="Gaige T."/>
            <person name="Haakenson W."/>
            <person name="Haglund K."/>
            <person name="Holmes A."/>
            <person name="Harkins R."/>
            <person name="Kim K."/>
            <person name="Kruchowski S.S."/>
            <person name="Strong C.M."/>
            <person name="Grewal N."/>
            <person name="Goyea E."/>
            <person name="Hou S."/>
            <person name="Levy A."/>
            <person name="Martinka S."/>
            <person name="Mead K."/>
            <person name="McLellan M.D."/>
            <person name="Meyer R."/>
            <person name="Randall-Maher J."/>
            <person name="Tomlinson C."/>
            <person name="Dauphin-Kohlberg S."/>
            <person name="Kozlowicz-Reilly A."/>
            <person name="Shah N."/>
            <person name="Swearengen-Shahid S."/>
            <person name="Snider J."/>
            <person name="Strong J.T."/>
            <person name="Thompson J."/>
            <person name="Yoakum M."/>
            <person name="Leonard S."/>
            <person name="Pearman C."/>
            <person name="Trani L."/>
            <person name="Radionenko M."/>
            <person name="Waligorski J.E."/>
            <person name="Wang C."/>
            <person name="Rock S.M."/>
            <person name="Tin-Wollam A.-M."/>
            <person name="Maupin R."/>
            <person name="Latreille P."/>
            <person name="Wendl M.C."/>
            <person name="Yang S.-P."/>
            <person name="Pohl C."/>
            <person name="Wallis J.W."/>
            <person name="Spieth J."/>
            <person name="Bieri T.A."/>
            <person name="Berkowicz N."/>
            <person name="Nelson J.O."/>
            <person name="Osborne J."/>
            <person name="Ding L."/>
            <person name="Meyer R."/>
            <person name="Sabo A."/>
            <person name="Shotland Y."/>
            <person name="Sinha P."/>
            <person name="Wohldmann P.E."/>
            <person name="Cook L.L."/>
            <person name="Hickenbotham M.T."/>
            <person name="Eldred J."/>
            <person name="Williams D."/>
            <person name="Jones T.A."/>
            <person name="She X."/>
            <person name="Ciccarelli F.D."/>
            <person name="Izaurralde E."/>
            <person name="Taylor J."/>
            <person name="Schmutz J."/>
            <person name="Myers R.M."/>
            <person name="Cox D.R."/>
            <person name="Huang X."/>
            <person name="McPherson J.D."/>
            <person name="Mardis E.R."/>
            <person name="Clifton S.W."/>
            <person name="Warren W.C."/>
            <person name="Chinwalla A.T."/>
            <person name="Eddy S.R."/>
            <person name="Marra M.A."/>
            <person name="Ovcharenko I."/>
            <person name="Furey T.S."/>
            <person name="Miller W."/>
            <person name="Eichler E.E."/>
            <person name="Bork P."/>
            <person name="Suyama M."/>
            <person name="Torrents D."/>
            <person name="Waterston R.H."/>
            <person name="Wilson R.K."/>
        </authorList>
    </citation>
    <scope>NUCLEOTIDE SEQUENCE [LARGE SCALE GENOMIC DNA] (IMGT ALLELE IGKV1-9*01)</scope>
</reference>
<reference key="2">
    <citation type="journal article" date="2001" name="Exp. Clin. Immunogenet.">
        <title>Nomenclature of the human immunoglobulin kappa (IGK) genes.</title>
        <authorList>
            <person name="Lefranc M.P."/>
        </authorList>
    </citation>
    <scope>NOMEMCLATURE</scope>
</reference>
<reference key="3">
    <citation type="book" date="2001" name="The Immunoglobulin FactsBook.">
        <title>The Immunoglobulin FactsBook.</title>
        <editorList>
            <person name="Lefranc M.P."/>
            <person name="Lefranc G."/>
        </editorList>
        <authorList>
            <person name="Lefranc M.P."/>
            <person name="Lefranc G."/>
        </authorList>
    </citation>
    <scope>NOMENCLATURE</scope>
</reference>
<reference key="4">
    <citation type="journal article" date="2007" name="Annu. Rev. Genet.">
        <title>Immunoglobulin somatic hypermutation.</title>
        <authorList>
            <person name="Teng G."/>
            <person name="Papavasiliou F.N."/>
        </authorList>
    </citation>
    <scope>REVIEW ON SOMATIC HYPERMUTATION</scope>
</reference>
<reference key="5">
    <citation type="journal article" date="2010" name="J. Allergy Clin. Immunol.">
        <title>Structure and function of immunoglobulins.</title>
        <authorList>
            <person name="Schroeder H.W. Jr."/>
            <person name="Cavacini L."/>
        </authorList>
    </citation>
    <scope>REVIEW ON IMMUNOGLOBULINS</scope>
</reference>
<reference key="6">
    <citation type="journal article" date="2012" name="Nat. Rev. Immunol.">
        <title>Molecular programming of B cell memory.</title>
        <authorList>
            <person name="McHeyzer-Williams M."/>
            <person name="Okitsu S."/>
            <person name="Wang N."/>
            <person name="McHeyzer-Williams L."/>
        </authorList>
    </citation>
    <scope>REVIEW ON FUNCTION</scope>
</reference>
<reference key="7">
    <citation type="journal article" date="2014" name="Front. Immunol.">
        <title>Immunoglobulin and T Cell Receptor Genes: IMGT((R)) and the Birth and Rise of Immunoinformatics.</title>
        <authorList>
            <person name="Lefranc M.P."/>
        </authorList>
    </citation>
    <scope>NOMENCLATURE</scope>
</reference>
<gene>
    <name evidence="4 9" type="primary">IGKV1-9</name>
</gene>
<evidence type="ECO:0000250" key="1">
    <source>
        <dbReference type="UniProtKB" id="P01602"/>
    </source>
</evidence>
<evidence type="ECO:0000255" key="2"/>
<evidence type="ECO:0000255" key="3">
    <source>
        <dbReference type="PROSITE-ProRule" id="PRU00114"/>
    </source>
</evidence>
<evidence type="ECO:0000303" key="4">
    <source>
    </source>
</evidence>
<evidence type="ECO:0000303" key="5">
    <source>
    </source>
</evidence>
<evidence type="ECO:0000303" key="6">
    <source>
    </source>
</evidence>
<evidence type="ECO:0000303" key="7">
    <source>
    </source>
</evidence>
<evidence type="ECO:0000303" key="8">
    <source>
    </source>
</evidence>
<evidence type="ECO:0000303" key="9">
    <source ref="3"/>
</evidence>
<evidence type="ECO:0000305" key="10"/>
<feature type="signal peptide" evidence="2">
    <location>
        <begin position="1"/>
        <end position="22"/>
    </location>
</feature>
<feature type="chain" id="PRO_5002181442" description="Immunoglobulin kappa variable 1-9" evidence="2">
    <location>
        <begin position="23"/>
        <end position="117"/>
    </location>
</feature>
<feature type="domain" description="Ig-like" evidence="3">
    <location>
        <begin position="24"/>
        <end position="117" status="greater than"/>
    </location>
</feature>
<feature type="region of interest" description="Framework-1" evidence="1">
    <location>
        <begin position="23"/>
        <end position="45"/>
    </location>
</feature>
<feature type="region of interest" description="Complementarity-determining-1" evidence="1">
    <location>
        <begin position="46"/>
        <end position="56"/>
    </location>
</feature>
<feature type="region of interest" description="Framework-2" evidence="1">
    <location>
        <begin position="57"/>
        <end position="71"/>
    </location>
</feature>
<feature type="region of interest" description="Complementarity-determining-2" evidence="1">
    <location>
        <begin position="72"/>
        <end position="78"/>
    </location>
</feature>
<feature type="region of interest" description="Framework-3" evidence="1">
    <location>
        <begin position="79"/>
        <end position="110"/>
    </location>
</feature>
<feature type="region of interest" description="Complementarity-determining-3" evidence="1">
    <location>
        <begin position="111"/>
        <end position="117" status="greater than"/>
    </location>
</feature>
<feature type="disulfide bond" evidence="3">
    <location>
        <begin position="45"/>
        <end position="110"/>
    </location>
</feature>
<feature type="non-terminal residue">
    <location>
        <position position="117"/>
    </location>
</feature>
<sequence>MDMRVPAQLLGLLLLWLPGARCDIQLTQSPSFLSASVGDRVTITCRASQGISSYLAWYQQKPGKAPKLLIYAASTLQSGVPSRFSGSGSGTEFTLTISSLQPEDFATYYCQQLNSYP</sequence>
<keyword id="KW-1064">Adaptive immunity</keyword>
<keyword id="KW-1003">Cell membrane</keyword>
<keyword id="KW-1015">Disulfide bond</keyword>
<keyword id="KW-0391">Immunity</keyword>
<keyword id="KW-1280">Immunoglobulin</keyword>
<keyword id="KW-0393">Immunoglobulin domain</keyword>
<keyword id="KW-0472">Membrane</keyword>
<keyword id="KW-1267">Proteomics identification</keyword>
<keyword id="KW-1185">Reference proteome</keyword>
<keyword id="KW-0964">Secreted</keyword>
<keyword id="KW-0732">Signal</keyword>
<organism>
    <name type="scientific">Homo sapiens</name>
    <name type="common">Human</name>
    <dbReference type="NCBI Taxonomy" id="9606"/>
    <lineage>
        <taxon>Eukaryota</taxon>
        <taxon>Metazoa</taxon>
        <taxon>Chordata</taxon>
        <taxon>Craniata</taxon>
        <taxon>Vertebrata</taxon>
        <taxon>Euteleostomi</taxon>
        <taxon>Mammalia</taxon>
        <taxon>Eutheria</taxon>
        <taxon>Euarchontoglires</taxon>
        <taxon>Primates</taxon>
        <taxon>Haplorrhini</taxon>
        <taxon>Catarrhini</taxon>
        <taxon>Hominidae</taxon>
        <taxon>Homo</taxon>
    </lineage>
</organism>
<dbReference type="EMBL" id="AC245015">
    <property type="status" value="NOT_ANNOTATED_CDS"/>
    <property type="molecule type" value="Genomic_DNA"/>
</dbReference>
<dbReference type="EMDB" id="EMD-13564"/>
<dbReference type="EMDB" id="EMD-35788"/>
<dbReference type="EMDB" id="EMD-35932"/>
<dbReference type="EMDB" id="EMD-35934"/>
<dbReference type="EMDB" id="EMD-37249"/>
<dbReference type="SMR" id="A0A0C4DH69"/>
<dbReference type="FunCoup" id="A0A0C4DH69">
    <property type="interactions" value="304"/>
</dbReference>
<dbReference type="IntAct" id="A0A0C4DH69">
    <property type="interactions" value="1"/>
</dbReference>
<dbReference type="MINT" id="A0A0C4DH69"/>
<dbReference type="IMGT_GENE-DB" id="IGKV1-9"/>
<dbReference type="BioMuta" id="IGKV1-9"/>
<dbReference type="jPOST" id="A0A0C4DH69"/>
<dbReference type="MassIVE" id="A0A0C4DH69"/>
<dbReference type="Ensembl" id="ENST00000493819.1">
    <property type="protein sequence ID" value="ENSP00000419598.1"/>
    <property type="gene ID" value="ENSG00000241755.1"/>
</dbReference>
<dbReference type="Ensembl" id="ENST00000633273.1">
    <property type="protein sequence ID" value="ENSP00000488384.1"/>
    <property type="gene ID" value="ENSG00000282758.1"/>
</dbReference>
<dbReference type="AGR" id="HGNC:5744"/>
<dbReference type="GeneCards" id="IGKV1-9"/>
<dbReference type="HGNC" id="HGNC:5744">
    <property type="gene designation" value="IGKV1-9"/>
</dbReference>
<dbReference type="HPA" id="ENSG00000241755">
    <property type="expression patterns" value="Tissue enhanced (intestine, lymphoid tissue, stomach)"/>
</dbReference>
<dbReference type="neXtProt" id="NX_A0A0C4DH69"/>
<dbReference type="OpenTargets" id="ENSG00000241755"/>
<dbReference type="VEuPathDB" id="HostDB:ENSG00000241755"/>
<dbReference type="GeneTree" id="ENSGT00940000153048"/>
<dbReference type="HOGENOM" id="CLU_077975_4_1_1"/>
<dbReference type="InParanoid" id="A0A0C4DH69"/>
<dbReference type="OMA" id="CQRTYNA"/>
<dbReference type="PAN-GO" id="A0A0C4DH69">
    <property type="GO annotations" value="3 GO annotations based on evolutionary models"/>
</dbReference>
<dbReference type="PhylomeDB" id="A0A0C4DH69"/>
<dbReference type="SignaLink" id="A0A0C4DH69"/>
<dbReference type="Pharos" id="A0A0C4DH69">
    <property type="development level" value="Tdark"/>
</dbReference>
<dbReference type="PRO" id="PR:A0A0C4DH69"/>
<dbReference type="Proteomes" id="UP000005640">
    <property type="component" value="Chromosome 2"/>
</dbReference>
<dbReference type="RNAct" id="A0A0C4DH69">
    <property type="molecule type" value="protein"/>
</dbReference>
<dbReference type="Bgee" id="ENSG00000241755">
    <property type="expression patterns" value="Expressed in rectum and 89 other cell types or tissues"/>
</dbReference>
<dbReference type="GO" id="GO:0005576">
    <property type="term" value="C:extracellular region"/>
    <property type="evidence" value="ECO:0007669"/>
    <property type="project" value="UniProtKB-SubCell"/>
</dbReference>
<dbReference type="GO" id="GO:0019814">
    <property type="term" value="C:immunoglobulin complex"/>
    <property type="evidence" value="ECO:0000318"/>
    <property type="project" value="GO_Central"/>
</dbReference>
<dbReference type="GO" id="GO:0005886">
    <property type="term" value="C:plasma membrane"/>
    <property type="evidence" value="ECO:0007669"/>
    <property type="project" value="UniProtKB-SubCell"/>
</dbReference>
<dbReference type="GO" id="GO:0002250">
    <property type="term" value="P:adaptive immune response"/>
    <property type="evidence" value="ECO:0007669"/>
    <property type="project" value="UniProtKB-KW"/>
</dbReference>
<dbReference type="GO" id="GO:0006955">
    <property type="term" value="P:immune response"/>
    <property type="evidence" value="ECO:0000318"/>
    <property type="project" value="GO_Central"/>
</dbReference>
<dbReference type="CDD" id="cd04980">
    <property type="entry name" value="IgV_L_kappa"/>
    <property type="match status" value="1"/>
</dbReference>
<dbReference type="FunFam" id="2.60.40.10:FF:000212">
    <property type="entry name" value="Immunoglobulin kappa chain variable 12-38"/>
    <property type="match status" value="1"/>
</dbReference>
<dbReference type="Gene3D" id="2.60.40.10">
    <property type="entry name" value="Immunoglobulins"/>
    <property type="match status" value="1"/>
</dbReference>
<dbReference type="InterPro" id="IPR007110">
    <property type="entry name" value="Ig-like_dom"/>
</dbReference>
<dbReference type="InterPro" id="IPR036179">
    <property type="entry name" value="Ig-like_dom_sf"/>
</dbReference>
<dbReference type="InterPro" id="IPR013783">
    <property type="entry name" value="Ig-like_fold"/>
</dbReference>
<dbReference type="InterPro" id="IPR003599">
    <property type="entry name" value="Ig_sub"/>
</dbReference>
<dbReference type="InterPro" id="IPR013106">
    <property type="entry name" value="Ig_V-set"/>
</dbReference>
<dbReference type="InterPro" id="IPR050150">
    <property type="entry name" value="IgV_Light_Chain"/>
</dbReference>
<dbReference type="PANTHER" id="PTHR23267">
    <property type="entry name" value="IMMUNOGLOBULIN LIGHT CHAIN"/>
    <property type="match status" value="1"/>
</dbReference>
<dbReference type="Pfam" id="PF07686">
    <property type="entry name" value="V-set"/>
    <property type="match status" value="1"/>
</dbReference>
<dbReference type="SMART" id="SM00409">
    <property type="entry name" value="IG"/>
    <property type="match status" value="1"/>
</dbReference>
<dbReference type="SMART" id="SM00406">
    <property type="entry name" value="IGv"/>
    <property type="match status" value="1"/>
</dbReference>
<dbReference type="SUPFAM" id="SSF48726">
    <property type="entry name" value="Immunoglobulin"/>
    <property type="match status" value="1"/>
</dbReference>
<dbReference type="PROSITE" id="PS50835">
    <property type="entry name" value="IG_LIKE"/>
    <property type="match status" value="1"/>
</dbReference>